<gene>
    <name evidence="1" type="primary">lexA</name>
    <name type="ordered locus">HSM_0711</name>
</gene>
<feature type="chain" id="PRO_1000074057" description="LexA repressor">
    <location>
        <begin position="1"/>
        <end position="210"/>
    </location>
</feature>
<feature type="DNA-binding region" description="H-T-H motif" evidence="1">
    <location>
        <begin position="31"/>
        <end position="51"/>
    </location>
</feature>
<feature type="active site" description="For autocatalytic cleavage activity" evidence="1">
    <location>
        <position position="126"/>
    </location>
</feature>
<feature type="active site" description="For autocatalytic cleavage activity" evidence="1">
    <location>
        <position position="163"/>
    </location>
</feature>
<feature type="site" description="Cleavage; by autolysis" evidence="1">
    <location>
        <begin position="91"/>
        <end position="92"/>
    </location>
</feature>
<organism>
    <name type="scientific">Histophilus somni (strain 2336)</name>
    <name type="common">Haemophilus somnus</name>
    <dbReference type="NCBI Taxonomy" id="228400"/>
    <lineage>
        <taxon>Bacteria</taxon>
        <taxon>Pseudomonadati</taxon>
        <taxon>Pseudomonadota</taxon>
        <taxon>Gammaproteobacteria</taxon>
        <taxon>Pasteurellales</taxon>
        <taxon>Pasteurellaceae</taxon>
        <taxon>Histophilus</taxon>
    </lineage>
</organism>
<name>LEXA_HISS2</name>
<accession>B0USF0</accession>
<dbReference type="EC" id="3.4.21.88" evidence="1"/>
<dbReference type="EMBL" id="CP000947">
    <property type="protein sequence ID" value="ACA32376.1"/>
    <property type="molecule type" value="Genomic_DNA"/>
</dbReference>
<dbReference type="RefSeq" id="WP_011608542.1">
    <property type="nucleotide sequence ID" value="NC_010519.1"/>
</dbReference>
<dbReference type="SMR" id="B0USF0"/>
<dbReference type="STRING" id="228400.HSM_0711"/>
<dbReference type="MEROPS" id="S24.001"/>
<dbReference type="GeneID" id="31486997"/>
<dbReference type="KEGG" id="hsm:HSM_0711"/>
<dbReference type="HOGENOM" id="CLU_066192_45_3_6"/>
<dbReference type="GO" id="GO:0003677">
    <property type="term" value="F:DNA binding"/>
    <property type="evidence" value="ECO:0007669"/>
    <property type="project" value="UniProtKB-UniRule"/>
</dbReference>
<dbReference type="GO" id="GO:0004252">
    <property type="term" value="F:serine-type endopeptidase activity"/>
    <property type="evidence" value="ECO:0007669"/>
    <property type="project" value="UniProtKB-UniRule"/>
</dbReference>
<dbReference type="GO" id="GO:0006281">
    <property type="term" value="P:DNA repair"/>
    <property type="evidence" value="ECO:0007669"/>
    <property type="project" value="UniProtKB-UniRule"/>
</dbReference>
<dbReference type="GO" id="GO:0006260">
    <property type="term" value="P:DNA replication"/>
    <property type="evidence" value="ECO:0007669"/>
    <property type="project" value="UniProtKB-UniRule"/>
</dbReference>
<dbReference type="GO" id="GO:0045892">
    <property type="term" value="P:negative regulation of DNA-templated transcription"/>
    <property type="evidence" value="ECO:0007669"/>
    <property type="project" value="UniProtKB-UniRule"/>
</dbReference>
<dbReference type="GO" id="GO:0006508">
    <property type="term" value="P:proteolysis"/>
    <property type="evidence" value="ECO:0007669"/>
    <property type="project" value="InterPro"/>
</dbReference>
<dbReference type="GO" id="GO:0009432">
    <property type="term" value="P:SOS response"/>
    <property type="evidence" value="ECO:0007669"/>
    <property type="project" value="UniProtKB-UniRule"/>
</dbReference>
<dbReference type="CDD" id="cd06529">
    <property type="entry name" value="S24_LexA-like"/>
    <property type="match status" value="1"/>
</dbReference>
<dbReference type="FunFam" id="1.10.10.10:FF:000009">
    <property type="entry name" value="LexA repressor"/>
    <property type="match status" value="1"/>
</dbReference>
<dbReference type="FunFam" id="2.10.109.10:FF:000001">
    <property type="entry name" value="LexA repressor"/>
    <property type="match status" value="1"/>
</dbReference>
<dbReference type="Gene3D" id="2.10.109.10">
    <property type="entry name" value="Umud Fragment, subunit A"/>
    <property type="match status" value="1"/>
</dbReference>
<dbReference type="Gene3D" id="1.10.10.10">
    <property type="entry name" value="Winged helix-like DNA-binding domain superfamily/Winged helix DNA-binding domain"/>
    <property type="match status" value="1"/>
</dbReference>
<dbReference type="HAMAP" id="MF_00015">
    <property type="entry name" value="LexA"/>
    <property type="match status" value="1"/>
</dbReference>
<dbReference type="InterPro" id="IPR006200">
    <property type="entry name" value="LexA"/>
</dbReference>
<dbReference type="InterPro" id="IPR039418">
    <property type="entry name" value="LexA-like"/>
</dbReference>
<dbReference type="InterPro" id="IPR036286">
    <property type="entry name" value="LexA/Signal_pep-like_sf"/>
</dbReference>
<dbReference type="InterPro" id="IPR006199">
    <property type="entry name" value="LexA_DNA-bd_dom"/>
</dbReference>
<dbReference type="InterPro" id="IPR050077">
    <property type="entry name" value="LexA_repressor"/>
</dbReference>
<dbReference type="InterPro" id="IPR006197">
    <property type="entry name" value="Peptidase_S24_LexA"/>
</dbReference>
<dbReference type="InterPro" id="IPR015927">
    <property type="entry name" value="Peptidase_S24_S26A/B/C"/>
</dbReference>
<dbReference type="InterPro" id="IPR036388">
    <property type="entry name" value="WH-like_DNA-bd_sf"/>
</dbReference>
<dbReference type="InterPro" id="IPR036390">
    <property type="entry name" value="WH_DNA-bd_sf"/>
</dbReference>
<dbReference type="NCBIfam" id="TIGR00498">
    <property type="entry name" value="lexA"/>
    <property type="match status" value="1"/>
</dbReference>
<dbReference type="PANTHER" id="PTHR33516">
    <property type="entry name" value="LEXA REPRESSOR"/>
    <property type="match status" value="1"/>
</dbReference>
<dbReference type="PANTHER" id="PTHR33516:SF2">
    <property type="entry name" value="LEXA REPRESSOR-RELATED"/>
    <property type="match status" value="1"/>
</dbReference>
<dbReference type="Pfam" id="PF01726">
    <property type="entry name" value="LexA_DNA_bind"/>
    <property type="match status" value="1"/>
</dbReference>
<dbReference type="Pfam" id="PF00717">
    <property type="entry name" value="Peptidase_S24"/>
    <property type="match status" value="1"/>
</dbReference>
<dbReference type="PRINTS" id="PR00726">
    <property type="entry name" value="LEXASERPTASE"/>
</dbReference>
<dbReference type="SUPFAM" id="SSF51306">
    <property type="entry name" value="LexA/Signal peptidase"/>
    <property type="match status" value="1"/>
</dbReference>
<dbReference type="SUPFAM" id="SSF46785">
    <property type="entry name" value="Winged helix' DNA-binding domain"/>
    <property type="match status" value="1"/>
</dbReference>
<proteinExistence type="inferred from homology"/>
<sequence length="210" mass="23490">MSSIKSLTTRQQEVFDLIKRHIESTGMPPTRVEISKELGFRSPNAAEEHLKALARKGVIEIVSGVSRGIRLLTDIEEPENEGLPLIGRVAAGEPILAEQHIEATYQVDANMFKPQADFLLKVYGQSMKDIGILDGDLLAVHSTKDIRNGQIVVARIEDEVTVKRFERKGSVVYLHAENEEFEPIVVDLTQQPYFEIEGIAVGIIRNNAWM</sequence>
<protein>
    <recommendedName>
        <fullName evidence="1">LexA repressor</fullName>
        <ecNumber evidence="1">3.4.21.88</ecNumber>
    </recommendedName>
</protein>
<comment type="function">
    <text evidence="1">Represses a number of genes involved in the response to DNA damage (SOS response), including recA and lexA. In the presence of single-stranded DNA, RecA interacts with LexA causing an autocatalytic cleavage which disrupts the DNA-binding part of LexA, leading to derepression of the SOS regulon and eventually DNA repair.</text>
</comment>
<comment type="catalytic activity">
    <reaction evidence="1">
        <text>Hydrolysis of Ala-|-Gly bond in repressor LexA.</text>
        <dbReference type="EC" id="3.4.21.88"/>
    </reaction>
</comment>
<comment type="subunit">
    <text evidence="1">Homodimer.</text>
</comment>
<comment type="similarity">
    <text evidence="1">Belongs to the peptidase S24 family.</text>
</comment>
<evidence type="ECO:0000255" key="1">
    <source>
        <dbReference type="HAMAP-Rule" id="MF_00015"/>
    </source>
</evidence>
<reference key="1">
    <citation type="submission" date="2008-02" db="EMBL/GenBank/DDBJ databases">
        <title>Complete sequence of Haemophilus somnus 2336.</title>
        <authorList>
            <consortium name="US DOE Joint Genome Institute"/>
            <person name="Siddaramappa S."/>
            <person name="Duncan A.J."/>
            <person name="Challacombe J.F."/>
            <person name="Rainey D."/>
            <person name="Gillaspy A.F."/>
            <person name="Carson M."/>
            <person name="Gipson J."/>
            <person name="Gipson M."/>
            <person name="Bruce D."/>
            <person name="Detter J.C."/>
            <person name="Han C.S."/>
            <person name="Land M."/>
            <person name="Tapia R."/>
            <person name="Thompson L.S."/>
            <person name="Orvis J."/>
            <person name="Zaitshik J."/>
            <person name="Barnes G."/>
            <person name="Brettin T.S."/>
            <person name="Dyer D.W."/>
            <person name="Inzana T.J."/>
        </authorList>
    </citation>
    <scope>NUCLEOTIDE SEQUENCE [LARGE SCALE GENOMIC DNA]</scope>
    <source>
        <strain>2336</strain>
    </source>
</reference>
<keyword id="KW-0068">Autocatalytic cleavage</keyword>
<keyword id="KW-0227">DNA damage</keyword>
<keyword id="KW-0234">DNA repair</keyword>
<keyword id="KW-0235">DNA replication</keyword>
<keyword id="KW-0238">DNA-binding</keyword>
<keyword id="KW-0378">Hydrolase</keyword>
<keyword id="KW-0678">Repressor</keyword>
<keyword id="KW-0742">SOS response</keyword>
<keyword id="KW-0804">Transcription</keyword>
<keyword id="KW-0805">Transcription regulation</keyword>